<evidence type="ECO:0000255" key="1">
    <source>
        <dbReference type="HAMAP-Rule" id="MF_00090"/>
    </source>
</evidence>
<dbReference type="EC" id="2.1.1.77" evidence="1"/>
<dbReference type="EMBL" id="CP000284">
    <property type="protein sequence ID" value="ABE50092.1"/>
    <property type="molecule type" value="Genomic_DNA"/>
</dbReference>
<dbReference type="RefSeq" id="WP_011480046.1">
    <property type="nucleotide sequence ID" value="NC_007947.1"/>
</dbReference>
<dbReference type="SMR" id="Q1H095"/>
<dbReference type="STRING" id="265072.Mfla_1825"/>
<dbReference type="KEGG" id="mfa:Mfla_1825"/>
<dbReference type="eggNOG" id="COG2518">
    <property type="taxonomic scope" value="Bacteria"/>
</dbReference>
<dbReference type="HOGENOM" id="CLU_055432_2_0_4"/>
<dbReference type="Proteomes" id="UP000002440">
    <property type="component" value="Chromosome"/>
</dbReference>
<dbReference type="GO" id="GO:0005737">
    <property type="term" value="C:cytoplasm"/>
    <property type="evidence" value="ECO:0007669"/>
    <property type="project" value="UniProtKB-SubCell"/>
</dbReference>
<dbReference type="GO" id="GO:0004719">
    <property type="term" value="F:protein-L-isoaspartate (D-aspartate) O-methyltransferase activity"/>
    <property type="evidence" value="ECO:0007669"/>
    <property type="project" value="UniProtKB-UniRule"/>
</dbReference>
<dbReference type="GO" id="GO:0032259">
    <property type="term" value="P:methylation"/>
    <property type="evidence" value="ECO:0007669"/>
    <property type="project" value="UniProtKB-KW"/>
</dbReference>
<dbReference type="GO" id="GO:0036211">
    <property type="term" value="P:protein modification process"/>
    <property type="evidence" value="ECO:0007669"/>
    <property type="project" value="UniProtKB-UniRule"/>
</dbReference>
<dbReference type="GO" id="GO:0030091">
    <property type="term" value="P:protein repair"/>
    <property type="evidence" value="ECO:0007669"/>
    <property type="project" value="UniProtKB-UniRule"/>
</dbReference>
<dbReference type="CDD" id="cd02440">
    <property type="entry name" value="AdoMet_MTases"/>
    <property type="match status" value="1"/>
</dbReference>
<dbReference type="FunFam" id="3.40.50.150:FF:000010">
    <property type="entry name" value="Protein-L-isoaspartate O-methyltransferase"/>
    <property type="match status" value="1"/>
</dbReference>
<dbReference type="Gene3D" id="3.40.50.150">
    <property type="entry name" value="Vaccinia Virus protein VP39"/>
    <property type="match status" value="1"/>
</dbReference>
<dbReference type="HAMAP" id="MF_00090">
    <property type="entry name" value="PIMT"/>
    <property type="match status" value="1"/>
</dbReference>
<dbReference type="InterPro" id="IPR000682">
    <property type="entry name" value="PCMT"/>
</dbReference>
<dbReference type="InterPro" id="IPR029063">
    <property type="entry name" value="SAM-dependent_MTases_sf"/>
</dbReference>
<dbReference type="NCBIfam" id="TIGR00080">
    <property type="entry name" value="pimt"/>
    <property type="match status" value="1"/>
</dbReference>
<dbReference type="NCBIfam" id="NF001453">
    <property type="entry name" value="PRK00312.1"/>
    <property type="match status" value="1"/>
</dbReference>
<dbReference type="PANTHER" id="PTHR11579">
    <property type="entry name" value="PROTEIN-L-ISOASPARTATE O-METHYLTRANSFERASE"/>
    <property type="match status" value="1"/>
</dbReference>
<dbReference type="PANTHER" id="PTHR11579:SF0">
    <property type="entry name" value="PROTEIN-L-ISOASPARTATE(D-ASPARTATE) O-METHYLTRANSFERASE"/>
    <property type="match status" value="1"/>
</dbReference>
<dbReference type="Pfam" id="PF01135">
    <property type="entry name" value="PCMT"/>
    <property type="match status" value="1"/>
</dbReference>
<dbReference type="SUPFAM" id="SSF53335">
    <property type="entry name" value="S-adenosyl-L-methionine-dependent methyltransferases"/>
    <property type="match status" value="1"/>
</dbReference>
<dbReference type="PROSITE" id="PS01279">
    <property type="entry name" value="PCMT"/>
    <property type="match status" value="1"/>
</dbReference>
<name>PIMT_METFK</name>
<protein>
    <recommendedName>
        <fullName evidence="1">Protein-L-isoaspartate O-methyltransferase</fullName>
        <ecNumber evidence="1">2.1.1.77</ecNumber>
    </recommendedName>
    <alternativeName>
        <fullName evidence="1">L-isoaspartyl protein carboxyl methyltransferase</fullName>
    </alternativeName>
    <alternativeName>
        <fullName evidence="1">Protein L-isoaspartyl methyltransferase</fullName>
    </alternativeName>
    <alternativeName>
        <fullName evidence="1">Protein-beta-aspartate methyltransferase</fullName>
        <shortName evidence="1">PIMT</shortName>
    </alternativeName>
</protein>
<proteinExistence type="inferred from homology"/>
<gene>
    <name evidence="1" type="primary">pcm</name>
    <name type="ordered locus">Mfla_1825</name>
</gene>
<feature type="chain" id="PRO_0000351879" description="Protein-L-isoaspartate O-methyltransferase">
    <location>
        <begin position="1"/>
        <end position="223"/>
    </location>
</feature>
<feature type="active site" evidence="1">
    <location>
        <position position="70"/>
    </location>
</feature>
<reference key="1">
    <citation type="submission" date="2006-03" db="EMBL/GenBank/DDBJ databases">
        <title>Complete sequence of Methylobacillus flagellatus KT.</title>
        <authorList>
            <consortium name="US DOE Joint Genome Institute"/>
            <person name="Copeland A."/>
            <person name="Lucas S."/>
            <person name="Lapidus A."/>
            <person name="Barry K."/>
            <person name="Detter J.C."/>
            <person name="Glavina del Rio T."/>
            <person name="Hammon N."/>
            <person name="Israni S."/>
            <person name="Dalin E."/>
            <person name="Tice H."/>
            <person name="Pitluck S."/>
            <person name="Brettin T."/>
            <person name="Bruce D."/>
            <person name="Han C."/>
            <person name="Tapia R."/>
            <person name="Saunders E."/>
            <person name="Gilna P."/>
            <person name="Schmutz J."/>
            <person name="Larimer F."/>
            <person name="Land M."/>
            <person name="Kyrpides N."/>
            <person name="Anderson I."/>
            <person name="Richardson P."/>
        </authorList>
    </citation>
    <scope>NUCLEOTIDE SEQUENCE [LARGE SCALE GENOMIC DNA]</scope>
    <source>
        <strain>ATCC 51484 / DSM 6875 / VKM B-1610 / KT</strain>
    </source>
</reference>
<organism>
    <name type="scientific">Methylobacillus flagellatus (strain ATCC 51484 / DSM 6875 / VKM B-1610 / KT)</name>
    <dbReference type="NCBI Taxonomy" id="265072"/>
    <lineage>
        <taxon>Bacteria</taxon>
        <taxon>Pseudomonadati</taxon>
        <taxon>Pseudomonadota</taxon>
        <taxon>Betaproteobacteria</taxon>
        <taxon>Nitrosomonadales</taxon>
        <taxon>Methylophilaceae</taxon>
        <taxon>Methylobacillus</taxon>
    </lineage>
</organism>
<keyword id="KW-0963">Cytoplasm</keyword>
<keyword id="KW-0489">Methyltransferase</keyword>
<keyword id="KW-1185">Reference proteome</keyword>
<keyword id="KW-0949">S-adenosyl-L-methionine</keyword>
<keyword id="KW-0808">Transferase</keyword>
<sequence length="223" mass="24260">MSSAALSGIGMTSQRTRERMLRRLSEKGIKDEVVLAALGAIPRHIFVDEALSSRAYEDGSLPIGFGQTISQPYIVARMTEILRNGGPLGKVLEIGTGCGYQTAVLSKVSKEVYSVERIRPLLMKARGHLRELRLANIKLKHADGTMGLPELAPFDGIMVTAAARHIPQELLEQLAVGGRMVIPVGTEEQILYLVEHLKTASGSEYRQSKLEAVKFVPLLGGTN</sequence>
<comment type="function">
    <text evidence="1">Catalyzes the methyl esterification of L-isoaspartyl residues in peptides and proteins that result from spontaneous decomposition of normal L-aspartyl and L-asparaginyl residues. It plays a role in the repair and/or degradation of damaged proteins.</text>
</comment>
<comment type="catalytic activity">
    <reaction evidence="1">
        <text>[protein]-L-isoaspartate + S-adenosyl-L-methionine = [protein]-L-isoaspartate alpha-methyl ester + S-adenosyl-L-homocysteine</text>
        <dbReference type="Rhea" id="RHEA:12705"/>
        <dbReference type="Rhea" id="RHEA-COMP:12143"/>
        <dbReference type="Rhea" id="RHEA-COMP:12144"/>
        <dbReference type="ChEBI" id="CHEBI:57856"/>
        <dbReference type="ChEBI" id="CHEBI:59789"/>
        <dbReference type="ChEBI" id="CHEBI:90596"/>
        <dbReference type="ChEBI" id="CHEBI:90598"/>
        <dbReference type="EC" id="2.1.1.77"/>
    </reaction>
</comment>
<comment type="subcellular location">
    <subcellularLocation>
        <location evidence="1">Cytoplasm</location>
    </subcellularLocation>
</comment>
<comment type="similarity">
    <text evidence="1">Belongs to the methyltransferase superfamily. L-isoaspartyl/D-aspartyl protein methyltransferase family.</text>
</comment>
<accession>Q1H095</accession>